<comment type="function">
    <text evidence="1">Involved in the processing of the 20S pre-rRNA.</text>
</comment>
<comment type="subcellular location">
    <subcellularLocation>
        <location evidence="1">Nucleus</location>
        <location evidence="1">Nucleolus</location>
    </subcellularLocation>
</comment>
<comment type="similarity">
    <text evidence="4">Belongs to the FYV7 family.</text>
</comment>
<accession>Q6CRY6</accession>
<sequence length="144" mass="17529">MAKVEKKKFTKEYRLKEIQRNLTKKARLKKEYLKVLKDEGYSIPEKPQYEKHDRSSVEAKKALNKQKVRDQREEHKLRKRTQKEKEQSFKEQEMKRIQLSKEKQVERDRRAKKLTQRTKRGQPVMGPKINDLLDKINSDETYTR</sequence>
<feature type="chain" id="PRO_0000087402" description="rRNA-processing protein FYV7">
    <location>
        <begin position="1"/>
        <end position="144"/>
    </location>
</feature>
<feature type="region of interest" description="Disordered" evidence="3">
    <location>
        <begin position="42"/>
        <end position="144"/>
    </location>
</feature>
<feature type="coiled-coil region" evidence="2">
    <location>
        <begin position="64"/>
        <end position="104"/>
    </location>
</feature>
<feature type="compositionally biased region" description="Basic and acidic residues" evidence="3">
    <location>
        <begin position="47"/>
        <end position="76"/>
    </location>
</feature>
<feature type="compositionally biased region" description="Basic and acidic residues" evidence="3">
    <location>
        <begin position="83"/>
        <end position="109"/>
    </location>
</feature>
<feature type="compositionally biased region" description="Basic residues" evidence="3">
    <location>
        <begin position="110"/>
        <end position="120"/>
    </location>
</feature>
<feature type="compositionally biased region" description="Basic and acidic residues" evidence="3">
    <location>
        <begin position="131"/>
        <end position="144"/>
    </location>
</feature>
<organism>
    <name type="scientific">Kluyveromyces lactis (strain ATCC 8585 / CBS 2359 / DSM 70799 / NBRC 1267 / NRRL Y-1140 / WM37)</name>
    <name type="common">Yeast</name>
    <name type="synonym">Candida sphaerica</name>
    <dbReference type="NCBI Taxonomy" id="284590"/>
    <lineage>
        <taxon>Eukaryota</taxon>
        <taxon>Fungi</taxon>
        <taxon>Dikarya</taxon>
        <taxon>Ascomycota</taxon>
        <taxon>Saccharomycotina</taxon>
        <taxon>Saccharomycetes</taxon>
        <taxon>Saccharomycetales</taxon>
        <taxon>Saccharomycetaceae</taxon>
        <taxon>Kluyveromyces</taxon>
    </lineage>
</organism>
<protein>
    <recommendedName>
        <fullName>rRNA-processing protein FYV7</fullName>
    </recommendedName>
</protein>
<keyword id="KW-0175">Coiled coil</keyword>
<keyword id="KW-0539">Nucleus</keyword>
<keyword id="KW-1185">Reference proteome</keyword>
<keyword id="KW-0698">rRNA processing</keyword>
<reference key="1">
    <citation type="journal article" date="2004" name="Nature">
        <title>Genome evolution in yeasts.</title>
        <authorList>
            <person name="Dujon B."/>
            <person name="Sherman D."/>
            <person name="Fischer G."/>
            <person name="Durrens P."/>
            <person name="Casaregola S."/>
            <person name="Lafontaine I."/>
            <person name="de Montigny J."/>
            <person name="Marck C."/>
            <person name="Neuveglise C."/>
            <person name="Talla E."/>
            <person name="Goffard N."/>
            <person name="Frangeul L."/>
            <person name="Aigle M."/>
            <person name="Anthouard V."/>
            <person name="Babour A."/>
            <person name="Barbe V."/>
            <person name="Barnay S."/>
            <person name="Blanchin S."/>
            <person name="Beckerich J.-M."/>
            <person name="Beyne E."/>
            <person name="Bleykasten C."/>
            <person name="Boisrame A."/>
            <person name="Boyer J."/>
            <person name="Cattolico L."/>
            <person name="Confanioleri F."/>
            <person name="de Daruvar A."/>
            <person name="Despons L."/>
            <person name="Fabre E."/>
            <person name="Fairhead C."/>
            <person name="Ferry-Dumazet H."/>
            <person name="Groppi A."/>
            <person name="Hantraye F."/>
            <person name="Hennequin C."/>
            <person name="Jauniaux N."/>
            <person name="Joyet P."/>
            <person name="Kachouri R."/>
            <person name="Kerrest A."/>
            <person name="Koszul R."/>
            <person name="Lemaire M."/>
            <person name="Lesur I."/>
            <person name="Ma L."/>
            <person name="Muller H."/>
            <person name="Nicaud J.-M."/>
            <person name="Nikolski M."/>
            <person name="Oztas S."/>
            <person name="Ozier-Kalogeropoulos O."/>
            <person name="Pellenz S."/>
            <person name="Potier S."/>
            <person name="Richard G.-F."/>
            <person name="Straub M.-L."/>
            <person name="Suleau A."/>
            <person name="Swennen D."/>
            <person name="Tekaia F."/>
            <person name="Wesolowski-Louvel M."/>
            <person name="Westhof E."/>
            <person name="Wirth B."/>
            <person name="Zeniou-Meyer M."/>
            <person name="Zivanovic Y."/>
            <person name="Bolotin-Fukuhara M."/>
            <person name="Thierry A."/>
            <person name="Bouchier C."/>
            <person name="Caudron B."/>
            <person name="Scarpelli C."/>
            <person name="Gaillardin C."/>
            <person name="Weissenbach J."/>
            <person name="Wincker P."/>
            <person name="Souciet J.-L."/>
        </authorList>
    </citation>
    <scope>NUCLEOTIDE SEQUENCE [LARGE SCALE GENOMIC DNA]</scope>
    <source>
        <strain>ATCC 8585 / CBS 2359 / DSM 70799 / NBRC 1267 / NRRL Y-1140 / WM37</strain>
    </source>
</reference>
<dbReference type="EMBL" id="CR382124">
    <property type="protein sequence ID" value="CAH00399.1"/>
    <property type="molecule type" value="Genomic_DNA"/>
</dbReference>
<dbReference type="RefSeq" id="XP_453303.1">
    <property type="nucleotide sequence ID" value="XM_453303.1"/>
</dbReference>
<dbReference type="SMR" id="Q6CRY6"/>
<dbReference type="FunCoup" id="Q6CRY6">
    <property type="interactions" value="116"/>
</dbReference>
<dbReference type="STRING" id="284590.Q6CRY6"/>
<dbReference type="PaxDb" id="284590-Q6CRY6"/>
<dbReference type="KEGG" id="kla:KLLA0_D05445g"/>
<dbReference type="eggNOG" id="KOG4851">
    <property type="taxonomic scope" value="Eukaryota"/>
</dbReference>
<dbReference type="HOGENOM" id="CLU_105541_0_0_1"/>
<dbReference type="InParanoid" id="Q6CRY6"/>
<dbReference type="OMA" id="MGPKIDD"/>
<dbReference type="Proteomes" id="UP000000598">
    <property type="component" value="Chromosome D"/>
</dbReference>
<dbReference type="GO" id="GO:0005730">
    <property type="term" value="C:nucleolus"/>
    <property type="evidence" value="ECO:0007669"/>
    <property type="project" value="UniProtKB-SubCell"/>
</dbReference>
<dbReference type="GO" id="GO:0006364">
    <property type="term" value="P:rRNA processing"/>
    <property type="evidence" value="ECO:0007669"/>
    <property type="project" value="UniProtKB-KW"/>
</dbReference>
<dbReference type="InterPro" id="IPR013730">
    <property type="entry name" value="Fyv7/TAP26"/>
</dbReference>
<dbReference type="InterPro" id="IPR017265">
    <property type="entry name" value="Fyv7_fungi"/>
</dbReference>
<dbReference type="Pfam" id="PF08524">
    <property type="entry name" value="rRNA_processing"/>
    <property type="match status" value="1"/>
</dbReference>
<dbReference type="PIRSF" id="PIRSF037708">
    <property type="entry name" value="rRNA_proc_FYV7"/>
    <property type="match status" value="1"/>
</dbReference>
<gene>
    <name type="primary">FYV7</name>
    <name type="ordered locus">KLLA0D05445g</name>
</gene>
<evidence type="ECO:0000250" key="1"/>
<evidence type="ECO:0000255" key="2"/>
<evidence type="ECO:0000256" key="3">
    <source>
        <dbReference type="SAM" id="MobiDB-lite"/>
    </source>
</evidence>
<evidence type="ECO:0000305" key="4"/>
<name>FYV7_KLULA</name>
<proteinExistence type="inferred from homology"/>